<comment type="function">
    <text evidence="1">Produces ATP from ADP in the presence of a proton gradient across the membrane.</text>
</comment>
<comment type="subunit">
    <text>F-type ATPases have 2 components, CF(1) - the catalytic core - and CF(0) - the membrane proton channel. CF(1) has five subunits: alpha(3), beta(3), gamma(1), delta(1), epsilon(1). CF(0) has three main subunits: a, b and c.</text>
</comment>
<comment type="subcellular location">
    <subcellularLocation>
        <location evidence="1">Cell inner membrane</location>
        <topology evidence="1">Peripheral membrane protein</topology>
    </subcellularLocation>
</comment>
<comment type="similarity">
    <text evidence="1">Belongs to the ATPase epsilon chain family.</text>
</comment>
<organism>
    <name type="scientific">Burkholderia pseudomallei (strain K96243)</name>
    <dbReference type="NCBI Taxonomy" id="272560"/>
    <lineage>
        <taxon>Bacteria</taxon>
        <taxon>Pseudomonadati</taxon>
        <taxon>Pseudomonadota</taxon>
        <taxon>Betaproteobacteria</taxon>
        <taxon>Burkholderiales</taxon>
        <taxon>Burkholderiaceae</taxon>
        <taxon>Burkholderia</taxon>
        <taxon>pseudomallei group</taxon>
    </lineage>
</organism>
<protein>
    <recommendedName>
        <fullName evidence="1">ATP synthase epsilon chain</fullName>
    </recommendedName>
    <alternativeName>
        <fullName evidence="1">ATP synthase F1 sector epsilon subunit</fullName>
    </alternativeName>
    <alternativeName>
        <fullName evidence="1">F-ATPase epsilon subunit</fullName>
    </alternativeName>
</protein>
<feature type="chain" id="PRO_0000188115" description="ATP synthase epsilon chain">
    <location>
        <begin position="1"/>
        <end position="141"/>
    </location>
</feature>
<gene>
    <name evidence="1" type="primary">atpC</name>
    <name type="ordered locus">BPSL3395</name>
</gene>
<accession>Q63PI1</accession>
<dbReference type="EMBL" id="BX571965">
    <property type="protein sequence ID" value="CAH37407.1"/>
    <property type="molecule type" value="Genomic_DNA"/>
</dbReference>
<dbReference type="RefSeq" id="WP_004195832.1">
    <property type="nucleotide sequence ID" value="NZ_CP009538.1"/>
</dbReference>
<dbReference type="RefSeq" id="YP_109988.1">
    <property type="nucleotide sequence ID" value="NC_006350.1"/>
</dbReference>
<dbReference type="SMR" id="Q63PI1"/>
<dbReference type="STRING" id="272560.BPSL3395"/>
<dbReference type="KEGG" id="bps:BPSL3395"/>
<dbReference type="PATRIC" id="fig|272560.51.peg.1795"/>
<dbReference type="eggNOG" id="COG0355">
    <property type="taxonomic scope" value="Bacteria"/>
</dbReference>
<dbReference type="Proteomes" id="UP000000605">
    <property type="component" value="Chromosome 1"/>
</dbReference>
<dbReference type="GO" id="GO:0005886">
    <property type="term" value="C:plasma membrane"/>
    <property type="evidence" value="ECO:0007669"/>
    <property type="project" value="UniProtKB-SubCell"/>
</dbReference>
<dbReference type="GO" id="GO:0045259">
    <property type="term" value="C:proton-transporting ATP synthase complex"/>
    <property type="evidence" value="ECO:0007669"/>
    <property type="project" value="UniProtKB-KW"/>
</dbReference>
<dbReference type="GO" id="GO:0005524">
    <property type="term" value="F:ATP binding"/>
    <property type="evidence" value="ECO:0007669"/>
    <property type="project" value="UniProtKB-UniRule"/>
</dbReference>
<dbReference type="GO" id="GO:0046933">
    <property type="term" value="F:proton-transporting ATP synthase activity, rotational mechanism"/>
    <property type="evidence" value="ECO:0007669"/>
    <property type="project" value="UniProtKB-UniRule"/>
</dbReference>
<dbReference type="CDD" id="cd12152">
    <property type="entry name" value="F1-ATPase_delta"/>
    <property type="match status" value="1"/>
</dbReference>
<dbReference type="FunFam" id="2.60.15.10:FF:000001">
    <property type="entry name" value="ATP synthase epsilon chain"/>
    <property type="match status" value="1"/>
</dbReference>
<dbReference type="Gene3D" id="1.20.5.440">
    <property type="entry name" value="ATP synthase delta/epsilon subunit, C-terminal domain"/>
    <property type="match status" value="1"/>
</dbReference>
<dbReference type="Gene3D" id="2.60.15.10">
    <property type="entry name" value="F0F1 ATP synthase delta/epsilon subunit, N-terminal"/>
    <property type="match status" value="1"/>
</dbReference>
<dbReference type="HAMAP" id="MF_00530">
    <property type="entry name" value="ATP_synth_epsil_bac"/>
    <property type="match status" value="1"/>
</dbReference>
<dbReference type="InterPro" id="IPR036794">
    <property type="entry name" value="ATP_F1_dsu/esu_C_sf"/>
</dbReference>
<dbReference type="InterPro" id="IPR001469">
    <property type="entry name" value="ATP_synth_F1_dsu/esu"/>
</dbReference>
<dbReference type="InterPro" id="IPR020546">
    <property type="entry name" value="ATP_synth_F1_dsu/esu_N"/>
</dbReference>
<dbReference type="InterPro" id="IPR020547">
    <property type="entry name" value="ATP_synth_F1_esu_C"/>
</dbReference>
<dbReference type="InterPro" id="IPR036771">
    <property type="entry name" value="ATPsynth_dsu/esu_N"/>
</dbReference>
<dbReference type="NCBIfam" id="TIGR01216">
    <property type="entry name" value="ATP_synt_epsi"/>
    <property type="match status" value="1"/>
</dbReference>
<dbReference type="NCBIfam" id="NF001847">
    <property type="entry name" value="PRK00571.1-4"/>
    <property type="match status" value="1"/>
</dbReference>
<dbReference type="PANTHER" id="PTHR13822">
    <property type="entry name" value="ATP SYNTHASE DELTA/EPSILON CHAIN"/>
    <property type="match status" value="1"/>
</dbReference>
<dbReference type="PANTHER" id="PTHR13822:SF10">
    <property type="entry name" value="ATP SYNTHASE EPSILON CHAIN, CHLOROPLASTIC"/>
    <property type="match status" value="1"/>
</dbReference>
<dbReference type="Pfam" id="PF00401">
    <property type="entry name" value="ATP-synt_DE"/>
    <property type="match status" value="1"/>
</dbReference>
<dbReference type="Pfam" id="PF02823">
    <property type="entry name" value="ATP-synt_DE_N"/>
    <property type="match status" value="1"/>
</dbReference>
<dbReference type="SUPFAM" id="SSF46604">
    <property type="entry name" value="Epsilon subunit of F1F0-ATP synthase C-terminal domain"/>
    <property type="match status" value="1"/>
</dbReference>
<dbReference type="SUPFAM" id="SSF51344">
    <property type="entry name" value="Epsilon subunit of F1F0-ATP synthase N-terminal domain"/>
    <property type="match status" value="1"/>
</dbReference>
<reference key="1">
    <citation type="journal article" date="2004" name="Proc. Natl. Acad. Sci. U.S.A.">
        <title>Genomic plasticity of the causative agent of melioidosis, Burkholderia pseudomallei.</title>
        <authorList>
            <person name="Holden M.T.G."/>
            <person name="Titball R.W."/>
            <person name="Peacock S.J."/>
            <person name="Cerdeno-Tarraga A.-M."/>
            <person name="Atkins T."/>
            <person name="Crossman L.C."/>
            <person name="Pitt T."/>
            <person name="Churcher C."/>
            <person name="Mungall K.L."/>
            <person name="Bentley S.D."/>
            <person name="Sebaihia M."/>
            <person name="Thomson N.R."/>
            <person name="Bason N."/>
            <person name="Beacham I.R."/>
            <person name="Brooks K."/>
            <person name="Brown K.A."/>
            <person name="Brown N.F."/>
            <person name="Challis G.L."/>
            <person name="Cherevach I."/>
            <person name="Chillingworth T."/>
            <person name="Cronin A."/>
            <person name="Crossett B."/>
            <person name="Davis P."/>
            <person name="DeShazer D."/>
            <person name="Feltwell T."/>
            <person name="Fraser A."/>
            <person name="Hance Z."/>
            <person name="Hauser H."/>
            <person name="Holroyd S."/>
            <person name="Jagels K."/>
            <person name="Keith K.E."/>
            <person name="Maddison M."/>
            <person name="Moule S."/>
            <person name="Price C."/>
            <person name="Quail M.A."/>
            <person name="Rabbinowitsch E."/>
            <person name="Rutherford K."/>
            <person name="Sanders M."/>
            <person name="Simmonds M."/>
            <person name="Songsivilai S."/>
            <person name="Stevens K."/>
            <person name="Tumapa S."/>
            <person name="Vesaratchavest M."/>
            <person name="Whitehead S."/>
            <person name="Yeats C."/>
            <person name="Barrell B.G."/>
            <person name="Oyston P.C.F."/>
            <person name="Parkhill J."/>
        </authorList>
    </citation>
    <scope>NUCLEOTIDE SEQUENCE [LARGE SCALE GENOMIC DNA]</scope>
    <source>
        <strain>K96243</strain>
    </source>
</reference>
<proteinExistence type="inferred from homology"/>
<keyword id="KW-0066">ATP synthesis</keyword>
<keyword id="KW-0997">Cell inner membrane</keyword>
<keyword id="KW-1003">Cell membrane</keyword>
<keyword id="KW-0139">CF(1)</keyword>
<keyword id="KW-0375">Hydrogen ion transport</keyword>
<keyword id="KW-0406">Ion transport</keyword>
<keyword id="KW-0472">Membrane</keyword>
<keyword id="KW-1185">Reference proteome</keyword>
<keyword id="KW-0813">Transport</keyword>
<name>ATPE_BURPS</name>
<sequence>MATIKVDVVSAEEQIFSGQAKFVALPGEAGELGILPGHTPLITRIRPGAVRIESESGDEEFVFVAGGILEVQPGAVTVLADTAIRGKDLDAAKAEEARKRAEETLQNAKSDIDLAKAQSELATAMAQLEAIQRLAKIRGKH</sequence>
<evidence type="ECO:0000255" key="1">
    <source>
        <dbReference type="HAMAP-Rule" id="MF_00530"/>
    </source>
</evidence>